<proteinExistence type="inferred from homology"/>
<gene>
    <name evidence="1" type="primary">rpsF</name>
    <name type="ordered locus">Mlut_23260</name>
</gene>
<protein>
    <recommendedName>
        <fullName evidence="1">Small ribosomal subunit protein bS6</fullName>
    </recommendedName>
    <alternativeName>
        <fullName evidence="2">30S ribosomal protein S6</fullName>
    </alternativeName>
</protein>
<accession>C5C7V1</accession>
<feature type="chain" id="PRO_1000205402" description="Small ribosomal subunit protein bS6">
    <location>
        <begin position="1"/>
        <end position="101"/>
    </location>
</feature>
<evidence type="ECO:0000255" key="1">
    <source>
        <dbReference type="HAMAP-Rule" id="MF_00360"/>
    </source>
</evidence>
<evidence type="ECO:0000305" key="2"/>
<comment type="function">
    <text evidence="1">Binds together with bS18 to 16S ribosomal RNA.</text>
</comment>
<comment type="similarity">
    <text evidence="1">Belongs to the bacterial ribosomal protein bS6 family.</text>
</comment>
<sequence>MRAYELMVLIDPEVDERTVEPTLKKYLEVVTNAGGTVDNIDVWGRRKTAYEIQKKSEAIYVVVNFQSEPAATQELDRLLNLNETILRTKIIRPEEQKITAE</sequence>
<organism>
    <name type="scientific">Micrococcus luteus (strain ATCC 4698 / DSM 20030 / JCM 1464 / CCM 169 / CCUG 5858 / IAM 1056 / NBRC 3333 / NCIMB 9278 / NCTC 2665 / VKM Ac-2230)</name>
    <name type="common">Micrococcus lysodeikticus</name>
    <dbReference type="NCBI Taxonomy" id="465515"/>
    <lineage>
        <taxon>Bacteria</taxon>
        <taxon>Bacillati</taxon>
        <taxon>Actinomycetota</taxon>
        <taxon>Actinomycetes</taxon>
        <taxon>Micrococcales</taxon>
        <taxon>Micrococcaceae</taxon>
        <taxon>Micrococcus</taxon>
    </lineage>
</organism>
<reference key="1">
    <citation type="journal article" date="2010" name="J. Bacteriol.">
        <title>Genome sequence of the Fleming strain of Micrococcus luteus, a simple free-living actinobacterium.</title>
        <authorList>
            <person name="Young M."/>
            <person name="Artsatbanov V."/>
            <person name="Beller H.R."/>
            <person name="Chandra G."/>
            <person name="Chater K.F."/>
            <person name="Dover L.G."/>
            <person name="Goh E.B."/>
            <person name="Kahan T."/>
            <person name="Kaprelyants A.S."/>
            <person name="Kyrpides N."/>
            <person name="Lapidus A."/>
            <person name="Lowry S.R."/>
            <person name="Lykidis A."/>
            <person name="Mahillon J."/>
            <person name="Markowitz V."/>
            <person name="Mavromatis K."/>
            <person name="Mukamolova G.V."/>
            <person name="Oren A."/>
            <person name="Rokem J.S."/>
            <person name="Smith M.C."/>
            <person name="Young D.I."/>
            <person name="Greenblatt C.L."/>
        </authorList>
    </citation>
    <scope>NUCLEOTIDE SEQUENCE [LARGE SCALE GENOMIC DNA]</scope>
    <source>
        <strain>ATCC 4698 / DSM 20030 / JCM 1464 / CCM 169 / CCUG 5858 / IAM 1056 / NBRC 3333 / NCIMB 9278 / NCTC 2665 / VKM Ac-2230</strain>
    </source>
</reference>
<keyword id="KW-1185">Reference proteome</keyword>
<keyword id="KW-0687">Ribonucleoprotein</keyword>
<keyword id="KW-0689">Ribosomal protein</keyword>
<keyword id="KW-0694">RNA-binding</keyword>
<keyword id="KW-0699">rRNA-binding</keyword>
<name>RS6_MICLC</name>
<dbReference type="EMBL" id="CP001628">
    <property type="protein sequence ID" value="ACS31789.1"/>
    <property type="molecule type" value="Genomic_DNA"/>
</dbReference>
<dbReference type="RefSeq" id="WP_002857790.1">
    <property type="nucleotide sequence ID" value="NZ_WBMF01000158.1"/>
</dbReference>
<dbReference type="SMR" id="C5C7V1"/>
<dbReference type="STRING" id="465515.Mlut_23260"/>
<dbReference type="EnsemblBacteria" id="ACS31789">
    <property type="protein sequence ID" value="ACS31789"/>
    <property type="gene ID" value="Mlut_23260"/>
</dbReference>
<dbReference type="GeneID" id="93363721"/>
<dbReference type="KEGG" id="mlu:Mlut_23260"/>
<dbReference type="eggNOG" id="COG0360">
    <property type="taxonomic scope" value="Bacteria"/>
</dbReference>
<dbReference type="HOGENOM" id="CLU_113441_5_3_11"/>
<dbReference type="Proteomes" id="UP000000738">
    <property type="component" value="Chromosome"/>
</dbReference>
<dbReference type="GO" id="GO:0005737">
    <property type="term" value="C:cytoplasm"/>
    <property type="evidence" value="ECO:0007669"/>
    <property type="project" value="UniProtKB-ARBA"/>
</dbReference>
<dbReference type="GO" id="GO:1990904">
    <property type="term" value="C:ribonucleoprotein complex"/>
    <property type="evidence" value="ECO:0007669"/>
    <property type="project" value="UniProtKB-KW"/>
</dbReference>
<dbReference type="GO" id="GO:0005840">
    <property type="term" value="C:ribosome"/>
    <property type="evidence" value="ECO:0007669"/>
    <property type="project" value="UniProtKB-KW"/>
</dbReference>
<dbReference type="GO" id="GO:0070181">
    <property type="term" value="F:small ribosomal subunit rRNA binding"/>
    <property type="evidence" value="ECO:0007669"/>
    <property type="project" value="TreeGrafter"/>
</dbReference>
<dbReference type="GO" id="GO:0003735">
    <property type="term" value="F:structural constituent of ribosome"/>
    <property type="evidence" value="ECO:0007669"/>
    <property type="project" value="InterPro"/>
</dbReference>
<dbReference type="GO" id="GO:0006412">
    <property type="term" value="P:translation"/>
    <property type="evidence" value="ECO:0007669"/>
    <property type="project" value="UniProtKB-UniRule"/>
</dbReference>
<dbReference type="CDD" id="cd00473">
    <property type="entry name" value="bS6"/>
    <property type="match status" value="1"/>
</dbReference>
<dbReference type="FunFam" id="3.30.70.60:FF:000002">
    <property type="entry name" value="30S ribosomal protein S6"/>
    <property type="match status" value="1"/>
</dbReference>
<dbReference type="Gene3D" id="3.30.70.60">
    <property type="match status" value="1"/>
</dbReference>
<dbReference type="HAMAP" id="MF_00360">
    <property type="entry name" value="Ribosomal_bS6"/>
    <property type="match status" value="1"/>
</dbReference>
<dbReference type="InterPro" id="IPR000529">
    <property type="entry name" value="Ribosomal_bS6"/>
</dbReference>
<dbReference type="InterPro" id="IPR035980">
    <property type="entry name" value="Ribosomal_bS6_sf"/>
</dbReference>
<dbReference type="InterPro" id="IPR020814">
    <property type="entry name" value="Ribosomal_S6_plastid/chlpt"/>
</dbReference>
<dbReference type="InterPro" id="IPR014717">
    <property type="entry name" value="Transl_elong_EF1B/ribsomal_bS6"/>
</dbReference>
<dbReference type="NCBIfam" id="TIGR00166">
    <property type="entry name" value="S6"/>
    <property type="match status" value="1"/>
</dbReference>
<dbReference type="PANTHER" id="PTHR21011">
    <property type="entry name" value="MITOCHONDRIAL 28S RIBOSOMAL PROTEIN S6"/>
    <property type="match status" value="1"/>
</dbReference>
<dbReference type="PANTHER" id="PTHR21011:SF1">
    <property type="entry name" value="SMALL RIBOSOMAL SUBUNIT PROTEIN BS6M"/>
    <property type="match status" value="1"/>
</dbReference>
<dbReference type="Pfam" id="PF01250">
    <property type="entry name" value="Ribosomal_S6"/>
    <property type="match status" value="1"/>
</dbReference>
<dbReference type="SUPFAM" id="SSF54995">
    <property type="entry name" value="Ribosomal protein S6"/>
    <property type="match status" value="1"/>
</dbReference>